<evidence type="ECO:0000250" key="1">
    <source>
        <dbReference type="UniProtKB" id="Q9SA49"/>
    </source>
</evidence>
<evidence type="ECO:0000269" key="2">
    <source>
    </source>
</evidence>
<evidence type="ECO:0000269" key="3">
    <source>
    </source>
</evidence>
<evidence type="ECO:0000303" key="4">
    <source>
    </source>
</evidence>
<evidence type="ECO:0000305" key="5"/>
<evidence type="ECO:0000312" key="6">
    <source>
        <dbReference type="Araport" id="AT1G79130"/>
    </source>
</evidence>
<evidence type="ECO:0000312" key="7">
    <source>
        <dbReference type="EMBL" id="AAC17066.1"/>
    </source>
</evidence>
<proteinExistence type="evidence at protein level"/>
<feature type="chain" id="PRO_0000433069" description="Auxin-responsive protein SAUR40">
    <location>
        <begin position="1"/>
        <end position="134"/>
    </location>
</feature>
<protein>
    <recommendedName>
        <fullName evidence="5">Auxin-responsive protein SAUR40</fullName>
    </recommendedName>
    <alternativeName>
        <fullName evidence="4">Protein SMALL AUXIN UP RNA 40</fullName>
    </alternativeName>
</protein>
<organism>
    <name type="scientific">Arabidopsis thaliana</name>
    <name type="common">Mouse-ear cress</name>
    <dbReference type="NCBI Taxonomy" id="3702"/>
    <lineage>
        <taxon>Eukaryota</taxon>
        <taxon>Viridiplantae</taxon>
        <taxon>Streptophyta</taxon>
        <taxon>Embryophyta</taxon>
        <taxon>Tracheophyta</taxon>
        <taxon>Spermatophyta</taxon>
        <taxon>Magnoliopsida</taxon>
        <taxon>eudicotyledons</taxon>
        <taxon>Gunneridae</taxon>
        <taxon>Pentapetalae</taxon>
        <taxon>rosids</taxon>
        <taxon>malvids</taxon>
        <taxon>Brassicales</taxon>
        <taxon>Brassicaceae</taxon>
        <taxon>Camelineae</taxon>
        <taxon>Arabidopsis</taxon>
    </lineage>
</organism>
<dbReference type="EMBL" id="AC002986">
    <property type="protein sequence ID" value="AAC17066.1"/>
    <property type="molecule type" value="Genomic_DNA"/>
</dbReference>
<dbReference type="EMBL" id="CP002684">
    <property type="protein sequence ID" value="AEE36208.1"/>
    <property type="molecule type" value="Genomic_DNA"/>
</dbReference>
<dbReference type="EMBL" id="BT024795">
    <property type="protein sequence ID" value="ABD59133.1"/>
    <property type="molecule type" value="mRNA"/>
</dbReference>
<dbReference type="PIR" id="T01042">
    <property type="entry name" value="T01042"/>
</dbReference>
<dbReference type="RefSeq" id="NP_178034.1">
    <property type="nucleotide sequence ID" value="NM_106564.4"/>
</dbReference>
<dbReference type="SMR" id="O64538"/>
<dbReference type="FunCoup" id="O64538">
    <property type="interactions" value="289"/>
</dbReference>
<dbReference type="IntAct" id="O64538">
    <property type="interactions" value="2"/>
</dbReference>
<dbReference type="STRING" id="3702.O64538"/>
<dbReference type="PaxDb" id="3702-AT1G79130.1"/>
<dbReference type="ProteomicsDB" id="226644"/>
<dbReference type="EnsemblPlants" id="AT1G79130.1">
    <property type="protein sequence ID" value="AT1G79130.1"/>
    <property type="gene ID" value="AT1G79130"/>
</dbReference>
<dbReference type="GeneID" id="844254"/>
<dbReference type="Gramene" id="AT1G79130.1">
    <property type="protein sequence ID" value="AT1G79130.1"/>
    <property type="gene ID" value="AT1G79130"/>
</dbReference>
<dbReference type="KEGG" id="ath:AT1G79130"/>
<dbReference type="Araport" id="AT1G79130"/>
<dbReference type="TAIR" id="AT1G79130">
    <property type="gene designation" value="SAUR40"/>
</dbReference>
<dbReference type="eggNOG" id="ENOG502S1QJ">
    <property type="taxonomic scope" value="Eukaryota"/>
</dbReference>
<dbReference type="HOGENOM" id="CLU_098106_7_1_1"/>
<dbReference type="InParanoid" id="O64538"/>
<dbReference type="OMA" id="PACTNTC"/>
<dbReference type="OrthoDB" id="838391at2759"/>
<dbReference type="PhylomeDB" id="O64538"/>
<dbReference type="PRO" id="PR:O64538"/>
<dbReference type="Proteomes" id="UP000006548">
    <property type="component" value="Chromosome 1"/>
</dbReference>
<dbReference type="ExpressionAtlas" id="O64538">
    <property type="expression patterns" value="baseline and differential"/>
</dbReference>
<dbReference type="GO" id="GO:0005737">
    <property type="term" value="C:cytoplasm"/>
    <property type="evidence" value="ECO:0000314"/>
    <property type="project" value="UniProtKB"/>
</dbReference>
<dbReference type="GO" id="GO:0009734">
    <property type="term" value="P:auxin-activated signaling pathway"/>
    <property type="evidence" value="ECO:0007669"/>
    <property type="project" value="UniProtKB-KW"/>
</dbReference>
<dbReference type="InterPro" id="IPR003676">
    <property type="entry name" value="SAUR_fam"/>
</dbReference>
<dbReference type="PANTHER" id="PTHR31374">
    <property type="entry name" value="AUXIN-INDUCED PROTEIN-LIKE-RELATED"/>
    <property type="match status" value="1"/>
</dbReference>
<dbReference type="PANTHER" id="PTHR31374:SF155">
    <property type="entry name" value="AUXIN-RESPONSIVE PROTEIN SAUR40"/>
    <property type="match status" value="1"/>
</dbReference>
<dbReference type="Pfam" id="PF02519">
    <property type="entry name" value="Auxin_inducible"/>
    <property type="match status" value="1"/>
</dbReference>
<reference key="1">
    <citation type="journal article" date="2000" name="Nature">
        <title>Sequence and analysis of chromosome 1 of the plant Arabidopsis thaliana.</title>
        <authorList>
            <person name="Theologis A."/>
            <person name="Ecker J.R."/>
            <person name="Palm C.J."/>
            <person name="Federspiel N.A."/>
            <person name="Kaul S."/>
            <person name="White O."/>
            <person name="Alonso J."/>
            <person name="Altafi H."/>
            <person name="Araujo R."/>
            <person name="Bowman C.L."/>
            <person name="Brooks S.Y."/>
            <person name="Buehler E."/>
            <person name="Chan A."/>
            <person name="Chao Q."/>
            <person name="Chen H."/>
            <person name="Cheuk R.F."/>
            <person name="Chin C.W."/>
            <person name="Chung M.K."/>
            <person name="Conn L."/>
            <person name="Conway A.B."/>
            <person name="Conway A.R."/>
            <person name="Creasy T.H."/>
            <person name="Dewar K."/>
            <person name="Dunn P."/>
            <person name="Etgu P."/>
            <person name="Feldblyum T.V."/>
            <person name="Feng J.-D."/>
            <person name="Fong B."/>
            <person name="Fujii C.Y."/>
            <person name="Gill J.E."/>
            <person name="Goldsmith A.D."/>
            <person name="Haas B."/>
            <person name="Hansen N.F."/>
            <person name="Hughes B."/>
            <person name="Huizar L."/>
            <person name="Hunter J.L."/>
            <person name="Jenkins J."/>
            <person name="Johnson-Hopson C."/>
            <person name="Khan S."/>
            <person name="Khaykin E."/>
            <person name="Kim C.J."/>
            <person name="Koo H.L."/>
            <person name="Kremenetskaia I."/>
            <person name="Kurtz D.B."/>
            <person name="Kwan A."/>
            <person name="Lam B."/>
            <person name="Langin-Hooper S."/>
            <person name="Lee A."/>
            <person name="Lee J.M."/>
            <person name="Lenz C.A."/>
            <person name="Li J.H."/>
            <person name="Li Y.-P."/>
            <person name="Lin X."/>
            <person name="Liu S.X."/>
            <person name="Liu Z.A."/>
            <person name="Luros J.S."/>
            <person name="Maiti R."/>
            <person name="Marziali A."/>
            <person name="Militscher J."/>
            <person name="Miranda M."/>
            <person name="Nguyen M."/>
            <person name="Nierman W.C."/>
            <person name="Osborne B.I."/>
            <person name="Pai G."/>
            <person name="Peterson J."/>
            <person name="Pham P.K."/>
            <person name="Rizzo M."/>
            <person name="Rooney T."/>
            <person name="Rowley D."/>
            <person name="Sakano H."/>
            <person name="Salzberg S.L."/>
            <person name="Schwartz J.R."/>
            <person name="Shinn P."/>
            <person name="Southwick A.M."/>
            <person name="Sun H."/>
            <person name="Tallon L.J."/>
            <person name="Tambunga G."/>
            <person name="Toriumi M.J."/>
            <person name="Town C.D."/>
            <person name="Utterback T."/>
            <person name="Van Aken S."/>
            <person name="Vaysberg M."/>
            <person name="Vysotskaia V.S."/>
            <person name="Walker M."/>
            <person name="Wu D."/>
            <person name="Yu G."/>
            <person name="Fraser C.M."/>
            <person name="Venter J.C."/>
            <person name="Davis R.W."/>
        </authorList>
    </citation>
    <scope>NUCLEOTIDE SEQUENCE [LARGE SCALE GENOMIC DNA]</scope>
    <source>
        <strain>cv. Columbia</strain>
    </source>
</reference>
<reference key="2">
    <citation type="journal article" date="2017" name="Plant J.">
        <title>Araport11: a complete reannotation of the Arabidopsis thaliana reference genome.</title>
        <authorList>
            <person name="Cheng C.Y."/>
            <person name="Krishnakumar V."/>
            <person name="Chan A.P."/>
            <person name="Thibaud-Nissen F."/>
            <person name="Schobel S."/>
            <person name="Town C.D."/>
        </authorList>
    </citation>
    <scope>GENOME REANNOTATION</scope>
    <source>
        <strain>cv. Columbia</strain>
    </source>
</reference>
<reference key="3">
    <citation type="submission" date="2006-03" db="EMBL/GenBank/DDBJ databases">
        <title>Arabidopsis ORF clones.</title>
        <authorList>
            <person name="Kim C.J."/>
            <person name="Chen H."/>
            <person name="Shinn P."/>
            <person name="Ecker J.R."/>
        </authorList>
    </citation>
    <scope>NUCLEOTIDE SEQUENCE [LARGE SCALE MRNA]</scope>
    <source>
        <strain>cv. Columbia</strain>
    </source>
</reference>
<reference key="4">
    <citation type="journal article" date="2002" name="Plant Mol. Biol.">
        <title>Auxin-responsive gene expression: genes, promoters and regulatory factors.</title>
        <authorList>
            <person name="Hagen G."/>
            <person name="Guilfoyle T.J."/>
        </authorList>
    </citation>
    <scope>GENE FAMILY</scope>
    <scope>NOMENCLATURE</scope>
</reference>
<reference key="5">
    <citation type="journal article" date="2013" name="Plant Signal. Behav.">
        <title>The tissue-specific and developmentally regulated expression patterns of the SAUR41 subfamily of small auxin up RNA genes: potential implications.</title>
        <authorList>
            <person name="Qiu T."/>
            <person name="Chen Y."/>
            <person name="Li M."/>
            <person name="Kong Y."/>
            <person name="Zhu Y."/>
            <person name="Han N."/>
            <person name="Bian H."/>
            <person name="Zhu M."/>
            <person name="Wang J."/>
        </authorList>
    </citation>
    <scope>SUBCELLULAR LOCATION</scope>
</reference>
<reference key="6">
    <citation type="journal article" date="2014" name="Plant Cell">
        <title>SAUR inhibition of PP2C-D phosphatases activates plasma membrane H+-ATPases to promote cell expansion in Arabidopsis.</title>
        <authorList>
            <person name="Spartz A.K."/>
            <person name="Ren H."/>
            <person name="Park M.Y."/>
            <person name="Grandt K.N."/>
            <person name="Lee S.H."/>
            <person name="Murphy A.S."/>
            <person name="Sussman M.R."/>
            <person name="Overvoorde P.J."/>
            <person name="Gray W.M."/>
        </authorList>
    </citation>
    <scope>FUNCTION</scope>
    <scope>INTERACTION WITH PP2C-D SUBFAMILY OF TYPE 2C PROTEIN PHOSPHATASES</scope>
    <source>
        <strain>cv. Columbia</strain>
    </source>
</reference>
<gene>
    <name evidence="4" type="primary">SAUR40</name>
    <name evidence="6" type="ordered locus">At1g79130</name>
    <name evidence="7" type="ORF">YUP8H12R.25</name>
</gene>
<accession>O64538</accession>
<keyword id="KW-0927">Auxin signaling pathway</keyword>
<keyword id="KW-0963">Cytoplasm</keyword>
<keyword id="KW-0217">Developmental protein</keyword>
<keyword id="KW-0341">Growth regulation</keyword>
<keyword id="KW-1185">Reference proteome</keyword>
<comment type="function">
    <text evidence="1 3">Provide a mechanistic link between auxin and plasma membrane H(+)-ATPases (PM H(+)-ATPases, e.g. AHA1 and AHA2), and triggers PM H(+)-ATPases activity by promoting phosphorylation of their C-terminal autoinhibitory domain as a result of PP2C-D subfamily of type 2C phosphatases inhibition, thus leading to the acidification of the apoplast and the facilitation of solutes and water uptake to drive cell expansion (PubMed:24858935). Plays a role in the regulation of cell expansion, root meristem patterning and auxin transport (By similarity).</text>
</comment>
<comment type="subunit">
    <text evidence="3">Interacts with and inhibits PP2C-D subfamily of type 2C phosphatases such as PP2C67/PP2C-D1.</text>
</comment>
<comment type="subcellular location">
    <subcellularLocation>
        <location evidence="2">Cytoplasm</location>
    </subcellularLocation>
</comment>
<comment type="similarity">
    <text evidence="5">Belongs to the ARG7 family.</text>
</comment>
<sequence length="134" mass="14600">MKPLIRRLSRIADSSSCNRNRSGDIHHPTSTYSSSVFLVKRATVASSVPSGHVPVNVGEDKERFVVSAELLNHPVFVGLLNRSAQEYGYTQKGVLHIPCNVFVFEQVVESLRSGIADDTSELIASLSGEDVSTE</sequence>
<name>SAU40_ARATH</name>